<accession>B7M8I2</accession>
<comment type="function">
    <text evidence="1">Required for accurate and efficient protein synthesis under certain stress conditions. May act as a fidelity factor of the translation reaction, by catalyzing a one-codon backward translocation of tRNAs on improperly translocated ribosomes. Back-translocation proceeds from a post-translocation (POST) complex to a pre-translocation (PRE) complex, thus giving elongation factor G a second chance to translocate the tRNAs correctly. Binds to ribosomes in a GTP-dependent manner.</text>
</comment>
<comment type="catalytic activity">
    <reaction evidence="1">
        <text>GTP + H2O = GDP + phosphate + H(+)</text>
        <dbReference type="Rhea" id="RHEA:19669"/>
        <dbReference type="ChEBI" id="CHEBI:15377"/>
        <dbReference type="ChEBI" id="CHEBI:15378"/>
        <dbReference type="ChEBI" id="CHEBI:37565"/>
        <dbReference type="ChEBI" id="CHEBI:43474"/>
        <dbReference type="ChEBI" id="CHEBI:58189"/>
        <dbReference type="EC" id="3.6.5.n1"/>
    </reaction>
</comment>
<comment type="subcellular location">
    <subcellularLocation>
        <location evidence="1">Cell inner membrane</location>
        <topology evidence="1">Peripheral membrane protein</topology>
        <orientation evidence="1">Cytoplasmic side</orientation>
    </subcellularLocation>
</comment>
<comment type="similarity">
    <text evidence="1">Belongs to the TRAFAC class translation factor GTPase superfamily. Classic translation factor GTPase family. LepA subfamily.</text>
</comment>
<feature type="chain" id="PRO_1000117023" description="Elongation factor 4">
    <location>
        <begin position="1"/>
        <end position="599"/>
    </location>
</feature>
<feature type="domain" description="tr-type G">
    <location>
        <begin position="2"/>
        <end position="184"/>
    </location>
</feature>
<feature type="binding site" evidence="1">
    <location>
        <begin position="14"/>
        <end position="19"/>
    </location>
    <ligand>
        <name>GTP</name>
        <dbReference type="ChEBI" id="CHEBI:37565"/>
    </ligand>
</feature>
<feature type="binding site" evidence="1">
    <location>
        <begin position="131"/>
        <end position="134"/>
    </location>
    <ligand>
        <name>GTP</name>
        <dbReference type="ChEBI" id="CHEBI:37565"/>
    </ligand>
</feature>
<evidence type="ECO:0000255" key="1">
    <source>
        <dbReference type="HAMAP-Rule" id="MF_00071"/>
    </source>
</evidence>
<dbReference type="EC" id="3.6.5.n1" evidence="1"/>
<dbReference type="EMBL" id="CU928160">
    <property type="protein sequence ID" value="CAQ99518.1"/>
    <property type="molecule type" value="Genomic_DNA"/>
</dbReference>
<dbReference type="RefSeq" id="WP_000790178.1">
    <property type="nucleotide sequence ID" value="NC_011741.1"/>
</dbReference>
<dbReference type="SMR" id="B7M8I2"/>
<dbReference type="KEGG" id="ecr:ECIAI1_2681"/>
<dbReference type="HOGENOM" id="CLU_009995_3_3_6"/>
<dbReference type="GO" id="GO:0005886">
    <property type="term" value="C:plasma membrane"/>
    <property type="evidence" value="ECO:0007669"/>
    <property type="project" value="UniProtKB-SubCell"/>
</dbReference>
<dbReference type="GO" id="GO:0005525">
    <property type="term" value="F:GTP binding"/>
    <property type="evidence" value="ECO:0007669"/>
    <property type="project" value="UniProtKB-UniRule"/>
</dbReference>
<dbReference type="GO" id="GO:0003924">
    <property type="term" value="F:GTPase activity"/>
    <property type="evidence" value="ECO:0007669"/>
    <property type="project" value="UniProtKB-UniRule"/>
</dbReference>
<dbReference type="GO" id="GO:0097216">
    <property type="term" value="F:guanosine tetraphosphate binding"/>
    <property type="evidence" value="ECO:0007669"/>
    <property type="project" value="UniProtKB-ARBA"/>
</dbReference>
<dbReference type="GO" id="GO:0043022">
    <property type="term" value="F:ribosome binding"/>
    <property type="evidence" value="ECO:0007669"/>
    <property type="project" value="UniProtKB-UniRule"/>
</dbReference>
<dbReference type="GO" id="GO:0003746">
    <property type="term" value="F:translation elongation factor activity"/>
    <property type="evidence" value="ECO:0007669"/>
    <property type="project" value="UniProtKB-UniRule"/>
</dbReference>
<dbReference type="GO" id="GO:0045727">
    <property type="term" value="P:positive regulation of translation"/>
    <property type="evidence" value="ECO:0007669"/>
    <property type="project" value="UniProtKB-UniRule"/>
</dbReference>
<dbReference type="CDD" id="cd03699">
    <property type="entry name" value="EF4_II"/>
    <property type="match status" value="1"/>
</dbReference>
<dbReference type="CDD" id="cd16260">
    <property type="entry name" value="EF4_III"/>
    <property type="match status" value="1"/>
</dbReference>
<dbReference type="CDD" id="cd01890">
    <property type="entry name" value="LepA"/>
    <property type="match status" value="1"/>
</dbReference>
<dbReference type="CDD" id="cd03709">
    <property type="entry name" value="lepA_C"/>
    <property type="match status" value="1"/>
</dbReference>
<dbReference type="FunFam" id="3.30.70.240:FF:000005">
    <property type="entry name" value="Elongation factor 4"/>
    <property type="match status" value="1"/>
</dbReference>
<dbReference type="FunFam" id="3.40.50.300:FF:000078">
    <property type="entry name" value="Elongation factor 4"/>
    <property type="match status" value="1"/>
</dbReference>
<dbReference type="FunFam" id="2.40.30.10:FF:000015">
    <property type="entry name" value="Translation factor GUF1, mitochondrial"/>
    <property type="match status" value="1"/>
</dbReference>
<dbReference type="FunFam" id="3.30.70.2570:FF:000001">
    <property type="entry name" value="Translation factor GUF1, mitochondrial"/>
    <property type="match status" value="1"/>
</dbReference>
<dbReference type="FunFam" id="3.30.70.870:FF:000004">
    <property type="entry name" value="Translation factor GUF1, mitochondrial"/>
    <property type="match status" value="1"/>
</dbReference>
<dbReference type="Gene3D" id="3.30.70.240">
    <property type="match status" value="1"/>
</dbReference>
<dbReference type="Gene3D" id="3.30.70.2570">
    <property type="entry name" value="Elongation factor 4, C-terminal domain"/>
    <property type="match status" value="1"/>
</dbReference>
<dbReference type="Gene3D" id="3.30.70.870">
    <property type="entry name" value="Elongation Factor G (Translational Gtpase), domain 3"/>
    <property type="match status" value="1"/>
</dbReference>
<dbReference type="Gene3D" id="3.40.50.300">
    <property type="entry name" value="P-loop containing nucleotide triphosphate hydrolases"/>
    <property type="match status" value="1"/>
</dbReference>
<dbReference type="Gene3D" id="2.40.30.10">
    <property type="entry name" value="Translation factors"/>
    <property type="match status" value="1"/>
</dbReference>
<dbReference type="HAMAP" id="MF_00071">
    <property type="entry name" value="LepA"/>
    <property type="match status" value="1"/>
</dbReference>
<dbReference type="InterPro" id="IPR006297">
    <property type="entry name" value="EF-4"/>
</dbReference>
<dbReference type="InterPro" id="IPR035647">
    <property type="entry name" value="EFG_III/V"/>
</dbReference>
<dbReference type="InterPro" id="IPR000640">
    <property type="entry name" value="EFG_V-like"/>
</dbReference>
<dbReference type="InterPro" id="IPR004161">
    <property type="entry name" value="EFTu-like_2"/>
</dbReference>
<dbReference type="InterPro" id="IPR031157">
    <property type="entry name" value="G_TR_CS"/>
</dbReference>
<dbReference type="InterPro" id="IPR038363">
    <property type="entry name" value="LepA_C_sf"/>
</dbReference>
<dbReference type="InterPro" id="IPR013842">
    <property type="entry name" value="LepA_CTD"/>
</dbReference>
<dbReference type="InterPro" id="IPR035654">
    <property type="entry name" value="LepA_IV"/>
</dbReference>
<dbReference type="InterPro" id="IPR027417">
    <property type="entry name" value="P-loop_NTPase"/>
</dbReference>
<dbReference type="InterPro" id="IPR005225">
    <property type="entry name" value="Small_GTP-bd"/>
</dbReference>
<dbReference type="InterPro" id="IPR000795">
    <property type="entry name" value="T_Tr_GTP-bd_dom"/>
</dbReference>
<dbReference type="NCBIfam" id="TIGR01393">
    <property type="entry name" value="lepA"/>
    <property type="match status" value="1"/>
</dbReference>
<dbReference type="NCBIfam" id="TIGR00231">
    <property type="entry name" value="small_GTP"/>
    <property type="match status" value="1"/>
</dbReference>
<dbReference type="PANTHER" id="PTHR43512:SF4">
    <property type="entry name" value="TRANSLATION FACTOR GUF1 HOMOLOG, CHLOROPLASTIC"/>
    <property type="match status" value="1"/>
</dbReference>
<dbReference type="PANTHER" id="PTHR43512">
    <property type="entry name" value="TRANSLATION FACTOR GUF1-RELATED"/>
    <property type="match status" value="1"/>
</dbReference>
<dbReference type="Pfam" id="PF00679">
    <property type="entry name" value="EFG_C"/>
    <property type="match status" value="1"/>
</dbReference>
<dbReference type="Pfam" id="PF00009">
    <property type="entry name" value="GTP_EFTU"/>
    <property type="match status" value="1"/>
</dbReference>
<dbReference type="Pfam" id="PF03144">
    <property type="entry name" value="GTP_EFTU_D2"/>
    <property type="match status" value="1"/>
</dbReference>
<dbReference type="Pfam" id="PF06421">
    <property type="entry name" value="LepA_C"/>
    <property type="match status" value="1"/>
</dbReference>
<dbReference type="PRINTS" id="PR00315">
    <property type="entry name" value="ELONGATNFCT"/>
</dbReference>
<dbReference type="SUPFAM" id="SSF54980">
    <property type="entry name" value="EF-G C-terminal domain-like"/>
    <property type="match status" value="2"/>
</dbReference>
<dbReference type="SUPFAM" id="SSF52540">
    <property type="entry name" value="P-loop containing nucleoside triphosphate hydrolases"/>
    <property type="match status" value="1"/>
</dbReference>
<dbReference type="PROSITE" id="PS00301">
    <property type="entry name" value="G_TR_1"/>
    <property type="match status" value="1"/>
</dbReference>
<dbReference type="PROSITE" id="PS51722">
    <property type="entry name" value="G_TR_2"/>
    <property type="match status" value="1"/>
</dbReference>
<organism>
    <name type="scientific">Escherichia coli O8 (strain IAI1)</name>
    <dbReference type="NCBI Taxonomy" id="585034"/>
    <lineage>
        <taxon>Bacteria</taxon>
        <taxon>Pseudomonadati</taxon>
        <taxon>Pseudomonadota</taxon>
        <taxon>Gammaproteobacteria</taxon>
        <taxon>Enterobacterales</taxon>
        <taxon>Enterobacteriaceae</taxon>
        <taxon>Escherichia</taxon>
    </lineage>
</organism>
<proteinExistence type="inferred from homology"/>
<protein>
    <recommendedName>
        <fullName evidence="1">Elongation factor 4</fullName>
        <shortName evidence="1">EF-4</shortName>
        <ecNumber evidence="1">3.6.5.n1</ecNumber>
    </recommendedName>
    <alternativeName>
        <fullName evidence="1">Ribosomal back-translocase LepA</fullName>
    </alternativeName>
</protein>
<sequence length="599" mass="66584">MKNIRNFSIIAHIDHGKSTLSDRIIQICGGLSDREMEAQVLDSMDLERERGITIKAQSVTLDYKASDGETYQLNFIDTPGHVDFSYEVSRSLAACEGALLVVDAGQGVEAQTLANCYTAMEMDLEVVPVLNKIDLPAADPERVAEEIEDIVGIDATEAVRCSAKTGVGVQDVLERLVRDIPPPEGDPEGPLQALIIDSWFDNYLGVVSLIRIKNGTLRKGDKVKVMSTGQTYNADRLGIFTPKQVDRTELKCGEVGWLVCAIKDIHGAPVGDTLTLARNPAEKALPGFKKVKPQVYAGLFPVSSDDYEAFRDALGKLSLNDASLFYEPESSSALGFGFRCGFLGLLHMEIIQERLEREYDLDLITTAPTVVYEVETTSREVIYVDSPSKLPAVNNIYELREPIAECHMLLPQAYLGNVITLCVEKRGVQTNMVYHGNQVALTYEIPMAEVVLDFFDRLKSTSRGYASLDYNFKRFQASDMVRVDVLINGERVDALALITHRDNSQNRGRELVEKMKDLIPRQQFDIAIQAAIGTHIIARSTVKQLRKNVLAKCYGGDISRKKKLLQKQKEGKKRMKQIGNVELPQEAFLAILHVGKDNK</sequence>
<keyword id="KW-0997">Cell inner membrane</keyword>
<keyword id="KW-1003">Cell membrane</keyword>
<keyword id="KW-0342">GTP-binding</keyword>
<keyword id="KW-0378">Hydrolase</keyword>
<keyword id="KW-0472">Membrane</keyword>
<keyword id="KW-0547">Nucleotide-binding</keyword>
<keyword id="KW-0648">Protein biosynthesis</keyword>
<reference key="1">
    <citation type="journal article" date="2009" name="PLoS Genet.">
        <title>Organised genome dynamics in the Escherichia coli species results in highly diverse adaptive paths.</title>
        <authorList>
            <person name="Touchon M."/>
            <person name="Hoede C."/>
            <person name="Tenaillon O."/>
            <person name="Barbe V."/>
            <person name="Baeriswyl S."/>
            <person name="Bidet P."/>
            <person name="Bingen E."/>
            <person name="Bonacorsi S."/>
            <person name="Bouchier C."/>
            <person name="Bouvet O."/>
            <person name="Calteau A."/>
            <person name="Chiapello H."/>
            <person name="Clermont O."/>
            <person name="Cruveiller S."/>
            <person name="Danchin A."/>
            <person name="Diard M."/>
            <person name="Dossat C."/>
            <person name="Karoui M.E."/>
            <person name="Frapy E."/>
            <person name="Garry L."/>
            <person name="Ghigo J.M."/>
            <person name="Gilles A.M."/>
            <person name="Johnson J."/>
            <person name="Le Bouguenec C."/>
            <person name="Lescat M."/>
            <person name="Mangenot S."/>
            <person name="Martinez-Jehanne V."/>
            <person name="Matic I."/>
            <person name="Nassif X."/>
            <person name="Oztas S."/>
            <person name="Petit M.A."/>
            <person name="Pichon C."/>
            <person name="Rouy Z."/>
            <person name="Ruf C.S."/>
            <person name="Schneider D."/>
            <person name="Tourret J."/>
            <person name="Vacherie B."/>
            <person name="Vallenet D."/>
            <person name="Medigue C."/>
            <person name="Rocha E.P.C."/>
            <person name="Denamur E."/>
        </authorList>
    </citation>
    <scope>NUCLEOTIDE SEQUENCE [LARGE SCALE GENOMIC DNA]</scope>
    <source>
        <strain>IAI1</strain>
    </source>
</reference>
<name>LEPA_ECO8A</name>
<gene>
    <name evidence="1" type="primary">lepA</name>
    <name type="ordered locus">ECIAI1_2681</name>
</gene>